<accession>P32249</accession>
<accession>B2R8N5</accession>
<accession>Q53F99</accession>
<accession>Q5JUH7</accession>
<keyword id="KW-0002">3D-structure</keyword>
<keyword id="KW-1064">Adaptive immunity</keyword>
<keyword id="KW-1003">Cell membrane</keyword>
<keyword id="KW-1015">Disulfide bond</keyword>
<keyword id="KW-0297">G-protein coupled receptor</keyword>
<keyword id="KW-0391">Immunity</keyword>
<keyword id="KW-0472">Membrane</keyword>
<keyword id="KW-0597">Phosphoprotein</keyword>
<keyword id="KW-1267">Proteomics identification</keyword>
<keyword id="KW-0675">Receptor</keyword>
<keyword id="KW-1185">Reference proteome</keyword>
<keyword id="KW-0807">Transducer</keyword>
<keyword id="KW-0812">Transmembrane</keyword>
<keyword id="KW-1133">Transmembrane helix</keyword>
<organism>
    <name type="scientific">Homo sapiens</name>
    <name type="common">Human</name>
    <dbReference type="NCBI Taxonomy" id="9606"/>
    <lineage>
        <taxon>Eukaryota</taxon>
        <taxon>Metazoa</taxon>
        <taxon>Chordata</taxon>
        <taxon>Craniata</taxon>
        <taxon>Vertebrata</taxon>
        <taxon>Euteleostomi</taxon>
        <taxon>Mammalia</taxon>
        <taxon>Eutheria</taxon>
        <taxon>Euarchontoglires</taxon>
        <taxon>Primates</taxon>
        <taxon>Haplorrhini</taxon>
        <taxon>Catarrhini</taxon>
        <taxon>Hominidae</taxon>
        <taxon>Homo</taxon>
    </lineage>
</organism>
<comment type="function">
    <text evidence="1 5 8 9 10 11 12 14">G-protein coupled receptor expressed in lymphocytes that acts as a chemotactic receptor for B-cells, T-cells, splenic dendritic cells, monocytes/macrophages and astrocytes (By similarity). Receptor for oxysterol 7-alpha,25-dihydroxycholesterol (7-alpha,25-OHC) and other related oxysterols (PubMed:21796212, PubMed:22875855, PubMed:22930711). Mediates cell positioning and movement of a number of cells by binding the 7-alpha,25-OHC ligand that forms a chemotactic gradient (By similarity). Binding of 7-alpha,25-OHC mediates the correct localization of B-cells during humoral immune responses (By similarity). Guides B-cell movement along the B-cell zone-T-cell zone boundary and later to interfollicular and outer follicular regions (By similarity). Its specific expression during B-cell maturation helps position B-cells appropriately for mounting T-dependent antibody responses (By similarity). Collaborates with CXCR5 to mediate B-cell migration; probably by forming a heterodimer with CXCR5 that affects the interaction between of CXCL13 and CXCR5 (PubMed:22913878). Also acts as a chemotactic receptor for some T-cells upon binding to 7-alpha,25-OHC ligand (By similarity). Promotes follicular helper T (Tfh) cells differentiation by positioning activated T-cells at the follicle-T-zone interface, promoting contact of newly activated CD4 T-cells with activated dendritic cells and exposing them to Tfh-cell-promoting inducible costimulator (ICOS) ligand (By similarity). Expression in splenic dendritic cells is required for their homeostasis, localization and ability to induce B- and T-cell responses: GPR183 acts as a chemotactic receptor in dendritic cells that mediates the accumulation of CD4(+) dendritic cells in bridging channels (By similarity). Regulates migration of astrocytes and is involved in communication between astrocytes and macrophages (PubMed:25297897). Promotes osteoclast precursor migration to bone surfaces (By similarity). Signals constitutively through G(i)-alpha, but not G(s)-alpha or G(q)-alpha (PubMed:21673108, PubMed:25297897). Signals constitutively also via MAPK1/3 (ERK1/2) (By similarity).</text>
</comment>
<comment type="subunit">
    <text evidence="11">Homodimer and heterodimer (PubMed:22913878). Heterodimerizes with CXCR5; leading to modulate the interaction between of CXCL13 and CXCR5 (PubMed:22913878).</text>
</comment>
<comment type="subcellular location">
    <subcellularLocation>
        <location evidence="5 6 8 12">Cell membrane</location>
        <topology evidence="2">Multi-pass membrane protein</topology>
    </subcellularLocation>
</comment>
<comment type="tissue specificity">
    <text evidence="5 14 15">Expressed abundantly in lymphoid tissues such as spleen and lymph node, and in B- and T-lymphocytes (PubMed:16540462, PubMed:8383238). Also highly expressed in lung, heart and gastrointestinal tract, and weakly expressed in the urogenital system and brain (PubMed:16540462, PubMed:8383238). Expressed in astrocytes (PubMed:25297897).</text>
</comment>
<comment type="induction">
    <text evidence="15">Induced following Epstein-Barr virus (EBV) infection (PubMed:8383238).</text>
</comment>
<comment type="miscellaneous">
    <text evidence="8 13">GSK682753A (8-[(2E)-3-(4-chlorophenyl)prop-2-enoyl]-3-[(3,4-dichlorophenyl)methyl]-1-oxa-3,8-diazaspiro[4.5]decan-2-one), an inverse agonist, selectively inhibits the constitutive activity of GPR183 with high potency and efficacy (PubMed:21673108, PubMed:23772388). Specifically inhibited by NIBR189 ((2E)-3-(4-Bromophenyl)-1-[4-(4-methoxybenzoyl)-1-piperazinyl]-2-propene-1-one).</text>
</comment>
<comment type="similarity">
    <text evidence="3">Belongs to the G-protein coupled receptor 1 family.</text>
</comment>
<comment type="caution">
    <text evidence="18">It is uncertain whether Met-1 or Met-5 is the initiator.</text>
</comment>
<feature type="chain" id="PRO_0000069411" description="G-protein coupled receptor 183">
    <location>
        <begin position="1"/>
        <end position="361"/>
    </location>
</feature>
<feature type="topological domain" description="Extracellular" evidence="2">
    <location>
        <begin position="1"/>
        <end position="31"/>
    </location>
</feature>
<feature type="transmembrane region" description="Helical; Name=1" evidence="2">
    <location>
        <begin position="32"/>
        <end position="57"/>
    </location>
</feature>
<feature type="topological domain" description="Cytoplasmic" evidence="2">
    <location>
        <begin position="58"/>
        <end position="77"/>
    </location>
</feature>
<feature type="transmembrane region" description="Helical; Name=2" evidence="2">
    <location>
        <begin position="78"/>
        <end position="95"/>
    </location>
</feature>
<feature type="topological domain" description="Extracellular" evidence="2">
    <location>
        <begin position="96"/>
        <end position="105"/>
    </location>
</feature>
<feature type="transmembrane region" description="Helical; Name=3" evidence="2">
    <location>
        <begin position="106"/>
        <end position="127"/>
    </location>
</feature>
<feature type="topological domain" description="Cytoplasmic" evidence="2">
    <location>
        <begin position="128"/>
        <end position="149"/>
    </location>
</feature>
<feature type="transmembrane region" description="Helical; Name=4" evidence="2">
    <location>
        <begin position="150"/>
        <end position="168"/>
    </location>
</feature>
<feature type="topological domain" description="Extracellular" evidence="2">
    <location>
        <begin position="169"/>
        <end position="192"/>
    </location>
</feature>
<feature type="transmembrane region" description="Helical; Name=5" evidence="2">
    <location>
        <begin position="193"/>
        <end position="215"/>
    </location>
</feature>
<feature type="topological domain" description="Cytoplasmic" evidence="2">
    <location>
        <begin position="216"/>
        <end position="241"/>
    </location>
</feature>
<feature type="transmembrane region" description="Helical; Name=6" evidence="2">
    <location>
        <begin position="242"/>
        <end position="265"/>
    </location>
</feature>
<feature type="topological domain" description="Extracellular" evidence="2">
    <location>
        <begin position="266"/>
        <end position="287"/>
    </location>
</feature>
<feature type="transmembrane region" description="Helical; Name=7" evidence="2">
    <location>
        <begin position="288"/>
        <end position="312"/>
    </location>
</feature>
<feature type="topological domain" description="Cytoplasmic" evidence="2">
    <location>
        <begin position="313"/>
        <end position="361"/>
    </location>
</feature>
<feature type="region of interest" description="Interaction with G proteins">
    <location>
        <begin position="126"/>
        <end position="134"/>
    </location>
</feature>
<feature type="region of interest" description="Disordered" evidence="4">
    <location>
        <begin position="340"/>
        <end position="361"/>
    </location>
</feature>
<feature type="compositionally biased region" description="Polar residues" evidence="4">
    <location>
        <begin position="348"/>
        <end position="361"/>
    </location>
</feature>
<feature type="binding site" evidence="19">
    <location>
        <position position="87"/>
    </location>
    <ligand>
        <name>7alpha,25-dihydroxycholesterol</name>
        <dbReference type="ChEBI" id="CHEBI:37623"/>
        <note>agonist</note>
    </ligand>
</feature>
<feature type="binding site" evidence="19">
    <location>
        <position position="112"/>
    </location>
    <ligand>
        <name>7alpha,25-dihydroxycholesterol</name>
        <dbReference type="ChEBI" id="CHEBI:37623"/>
        <note>agonist</note>
    </ligand>
</feature>
<feature type="binding site" evidence="19">
    <location>
        <position position="116"/>
    </location>
    <ligand>
        <name>7alpha,25-dihydroxycholesterol</name>
        <dbReference type="ChEBI" id="CHEBI:37623"/>
        <note>agonist</note>
    </ligand>
</feature>
<feature type="binding site" evidence="19">
    <location>
        <position position="260"/>
    </location>
    <ligand>
        <name>7alpha,25-dihydroxycholesterol</name>
        <dbReference type="ChEBI" id="CHEBI:37623"/>
        <note>agonist</note>
    </ligand>
</feature>
<feature type="modified residue" description="Phosphoserine" evidence="1">
    <location>
        <position position="328"/>
    </location>
</feature>
<feature type="disulfide bond" evidence="3">
    <location>
        <begin position="104"/>
        <end position="181"/>
    </location>
</feature>
<feature type="sequence variant" id="VAR_054147" description="In an acute myeloid leukemia sample; somatic mutation; dbSNP:rs1466524306." evidence="7">
    <original>A</original>
    <variation>V</variation>
    <location>
        <position position="338"/>
    </location>
</feature>
<feature type="mutagenesis site" description="Strongly reduced localization to the cell membrane and reduced protein expression levels." evidence="12">
    <original>C</original>
    <variation>A</variation>
    <location>
        <position position="21"/>
    </location>
</feature>
<feature type="mutagenesis site" description="Loss of receptor activation without affecting oxysterol agonist-binding." evidence="10 12">
    <original>D</original>
    <variation>A</variation>
    <location>
        <position position="77"/>
    </location>
</feature>
<feature type="mutagenesis site" description="Strong decrease in oxysterol agonist-binding and receptor activation." evidence="10">
    <original>D</original>
    <variation>R</variation>
    <location>
        <position position="77"/>
    </location>
</feature>
<feature type="mutagenesis site" description="Strongly reduced localization to the cell membrane." evidence="12">
    <original>P</original>
    <variation>A</variation>
    <location>
        <position position="85"/>
    </location>
</feature>
<feature type="mutagenesis site" description="Strong decrease in oxysterol agonist-binding and receptor activation." evidence="6 10 12">
    <original>R</original>
    <variation>A</variation>
    <location>
        <position position="87"/>
    </location>
</feature>
<feature type="mutagenesis site" description="Slight decrease in oxysterol agonist-binding and receptor activation." evidence="6 10">
    <original>R</original>
    <variation>K</variation>
    <location>
        <position position="87"/>
    </location>
</feature>
<feature type="mutagenesis site" description="Slight decrease in oxysterol agonist-binding and receptor activation." evidence="12">
    <original>R</original>
    <variation>W</variation>
    <location>
        <position position="87"/>
    </location>
</feature>
<feature type="mutagenesis site" description="10-fold reduction in receptor activation. Strongly reduced localization to the cell membrane." evidence="10 12">
    <original>Y</original>
    <variation>A</variation>
    <location>
        <position position="90"/>
    </location>
</feature>
<feature type="mutagenesis site" description="Abolishes localization to the cell membrane without affecting protein expression levels." evidence="12">
    <original>C</original>
    <variation>A</variation>
    <location>
        <position position="104"/>
    </location>
</feature>
<feature type="mutagenesis site" description="500-fold decrease of IC(50) for GSK682753A. No effect on oxysterol agonist-binding and receptor activation." evidence="8 10">
    <original>F</original>
    <variation>A</variation>
    <variation>Y</variation>
    <location>
        <position position="111"/>
    </location>
</feature>
<feature type="mutagenesis site" description="Strong decrease in oxysterol agonist-binding and receptor activation." evidence="10 12">
    <original>Y</original>
    <variation>A</variation>
    <variation>F</variation>
    <location>
        <position position="112"/>
    </location>
</feature>
<feature type="mutagenesis site" description="Strongly reduced localization to the cell membrane." evidence="12">
    <original>N</original>
    <variation>A</variation>
    <location>
        <position position="114"/>
    </location>
</feature>
<feature type="mutagenesis site" description="No effect." evidence="10">
    <original>T</original>
    <variation>A</variation>
    <variation>F</variation>
    <location>
        <position position="115"/>
    </location>
</feature>
<feature type="mutagenesis site" description="Strong decrease in oxysterol agonist-binding and receptor activation." evidence="10 12">
    <original>Y</original>
    <variation>A</variation>
    <variation>F</variation>
    <location>
        <position position="116"/>
    </location>
</feature>
<feature type="mutagenesis site" description="Abolishes localization to the cell membrane without affecting protein expression levels." evidence="12">
    <original>C</original>
    <variation>A</variation>
    <location>
        <position position="181"/>
    </location>
</feature>
<feature type="mutagenesis site" description="Strong reduction in ligand potency." evidence="12">
    <original>E</original>
    <variation>A</variation>
    <location>
        <position position="183"/>
    </location>
</feature>
<feature type="mutagenesis site" description="Reduced localization to the cell membrane and reduced receptor function." evidence="12">
    <original>L</original>
    <variation>A</variation>
    <location>
        <position position="197"/>
    </location>
</feature>
<feature type="mutagenesis site" description="No effect." evidence="10">
    <original>Y</original>
    <variation>A</variation>
    <variation>F</variation>
    <location>
        <position position="205"/>
    </location>
</feature>
<feature type="mutagenesis site" description="Increased receptor activation." evidence="6">
    <original>C</original>
    <variation>A</variation>
    <location>
        <position position="256"/>
    </location>
</feature>
<feature type="mutagenesis site" description="Increased receptor activation. Strongly reduced localization to the cell membrane." evidence="6 12">
    <original>F</original>
    <variation>A</variation>
    <location>
        <position position="257"/>
    </location>
</feature>
<feature type="mutagenesis site" description="Strong decrease in oxysterol agonist-binding and receptor activation." evidence="10 12">
    <original>Y</original>
    <variation>A</variation>
    <variation>F</variation>
    <location>
        <position position="260"/>
    </location>
</feature>
<feature type="mutagenesis site" description="Reduced localization to the cell membrane and reduced receptor function." evidence="12">
    <original>H</original>
    <variation>A</variation>
    <location>
        <position position="261"/>
    </location>
</feature>
<feature type="mutagenesis site" description="Reduced localization to the cell membrane and reduced receptor function." evidence="12">
    <original>I</original>
    <variation>A</variation>
    <location>
        <position position="264"/>
    </location>
</feature>
<feature type="mutagenesis site" description="Strongly reduced localization to the cell membrane and reduced protein expression levels." evidence="12">
    <original>C</original>
    <variation>A</variation>
    <location>
        <position position="280"/>
    </location>
</feature>
<feature type="mutagenesis site" description="10-fold reduction in receptor activation." evidence="10">
    <original>Q</original>
    <variation>A</variation>
    <location>
        <position position="287"/>
    </location>
</feature>
<feature type="mutagenesis site" description="10-fold reduction in receptor activation." evidence="10">
    <original>H</original>
    <variation>A</variation>
    <location>
        <position position="291"/>
    </location>
</feature>
<feature type="mutagenesis site" description="Reduced localization to the cell membrane and reduced receptor function." evidence="12">
    <original>H</original>
    <variation>A</variation>
    <location>
        <position position="291"/>
    </location>
</feature>
<feature type="mutagenesis site" description="Reduced localization to the cell membrane and reduced receptor function." evidence="12">
    <original>V</original>
    <variation>A</variation>
    <location>
        <position position="294"/>
    </location>
</feature>
<feature type="mutagenesis site" description="Reduced localization to the cell membrane and reduced receptor function, without affecting oxysterol agonist-binding." evidence="12">
    <original>M</original>
    <variation>A</variation>
    <location>
        <position position="297"/>
    </location>
</feature>
<feature type="mutagenesis site" description="Reduced localization to the cell membrane and reduced receptor function. Reduced oxysterol agonist-binding." evidence="12">
    <original>M</original>
    <variation>I</variation>
    <location>
        <position position="297"/>
    </location>
</feature>
<feature type="sequence conflict" description="In Ref. 3; BAD97110." evidence="18" ref="3">
    <original>A</original>
    <variation>V</variation>
    <location>
        <position position="6"/>
    </location>
</feature>
<feature type="sequence conflict" description="In Ref. 2; BAG36232." evidence="18" ref="2">
    <original>I</original>
    <variation>N</variation>
    <location>
        <position position="179"/>
    </location>
</feature>
<feature type="sequence conflict" description="In Ref. 2; BAG36232." evidence="18" ref="2">
    <original>R</original>
    <variation>Q</variation>
    <location>
        <position position="325"/>
    </location>
</feature>
<feature type="turn" evidence="22">
    <location>
        <begin position="23"/>
        <end position="26"/>
    </location>
</feature>
<feature type="helix" evidence="21">
    <location>
        <begin position="27"/>
        <end position="58"/>
    </location>
</feature>
<feature type="helix" evidence="21">
    <location>
        <begin position="67"/>
        <end position="82"/>
    </location>
</feature>
<feature type="turn" evidence="21">
    <location>
        <begin position="85"/>
        <end position="87"/>
    </location>
</feature>
<feature type="helix" evidence="21">
    <location>
        <begin position="102"/>
        <end position="132"/>
    </location>
</feature>
<feature type="helix" evidence="21">
    <location>
        <begin position="136"/>
        <end position="142"/>
    </location>
</feature>
<feature type="helix" evidence="21">
    <location>
        <begin position="145"/>
        <end position="163"/>
    </location>
</feature>
<feature type="helix" evidence="21">
    <location>
        <begin position="165"/>
        <end position="167"/>
    </location>
</feature>
<feature type="helix" evidence="22">
    <location>
        <begin position="184"/>
        <end position="187"/>
    </location>
</feature>
<feature type="turn" evidence="22">
    <location>
        <begin position="190"/>
        <end position="192"/>
    </location>
</feature>
<feature type="helix" evidence="21">
    <location>
        <begin position="196"/>
        <end position="204"/>
    </location>
</feature>
<feature type="helix" evidence="21">
    <location>
        <begin position="206"/>
        <end position="224"/>
    </location>
</feature>
<feature type="helix" evidence="22">
    <location>
        <begin position="231"/>
        <end position="236"/>
    </location>
</feature>
<feature type="helix" evidence="21">
    <location>
        <begin position="238"/>
        <end position="256"/>
    </location>
</feature>
<feature type="helix" evidence="21">
    <location>
        <begin position="258"/>
        <end position="269"/>
    </location>
</feature>
<feature type="turn" evidence="21">
    <location>
        <begin position="270"/>
        <end position="273"/>
    </location>
</feature>
<feature type="turn" evidence="22">
    <location>
        <begin position="279"/>
        <end position="281"/>
    </location>
</feature>
<feature type="strand" evidence="21">
    <location>
        <begin position="284"/>
        <end position="286"/>
    </location>
</feature>
<feature type="helix" evidence="21">
    <location>
        <begin position="287"/>
        <end position="310"/>
    </location>
</feature>
<feature type="strand" evidence="21">
    <location>
        <begin position="311"/>
        <end position="313"/>
    </location>
</feature>
<feature type="helix" evidence="21">
    <location>
        <begin position="316"/>
        <end position="319"/>
    </location>
</feature>
<evidence type="ECO:0000250" key="1">
    <source>
        <dbReference type="UniProtKB" id="Q3U6B2"/>
    </source>
</evidence>
<evidence type="ECO:0000255" key="2"/>
<evidence type="ECO:0000255" key="3">
    <source>
        <dbReference type="PROSITE-ProRule" id="PRU00521"/>
    </source>
</evidence>
<evidence type="ECO:0000256" key="4">
    <source>
        <dbReference type="SAM" id="MobiDB-lite"/>
    </source>
</evidence>
<evidence type="ECO:0000269" key="5">
    <source>
    </source>
</evidence>
<evidence type="ECO:0000269" key="6">
    <source>
    </source>
</evidence>
<evidence type="ECO:0000269" key="7">
    <source>
    </source>
</evidence>
<evidence type="ECO:0000269" key="8">
    <source>
    </source>
</evidence>
<evidence type="ECO:0000269" key="9">
    <source>
    </source>
</evidence>
<evidence type="ECO:0000269" key="10">
    <source>
    </source>
</evidence>
<evidence type="ECO:0000269" key="11">
    <source>
    </source>
</evidence>
<evidence type="ECO:0000269" key="12">
    <source>
    </source>
</evidence>
<evidence type="ECO:0000269" key="13">
    <source>
    </source>
</evidence>
<evidence type="ECO:0000269" key="14">
    <source>
    </source>
</evidence>
<evidence type="ECO:0000269" key="15">
    <source>
    </source>
</evidence>
<evidence type="ECO:0000303" key="16">
    <source>
    </source>
</evidence>
<evidence type="ECO:0000303" key="17">
    <source>
    </source>
</evidence>
<evidence type="ECO:0000305" key="18"/>
<evidence type="ECO:0000305" key="19">
    <source>
    </source>
</evidence>
<evidence type="ECO:0000312" key="20">
    <source>
        <dbReference type="HGNC" id="HGNC:3128"/>
    </source>
</evidence>
<evidence type="ECO:0007829" key="21">
    <source>
        <dbReference type="PDB" id="7TUY"/>
    </source>
</evidence>
<evidence type="ECO:0007829" key="22">
    <source>
        <dbReference type="PDB" id="7TUZ"/>
    </source>
</evidence>
<reference key="1">
    <citation type="journal article" date="1993" name="J. Virol.">
        <title>Epstein-Barr virus-induced genes: first lymphocyte-specific G protein-coupled peptide receptors.</title>
        <authorList>
            <person name="Birkenbach M.P."/>
            <person name="Josefsen K."/>
            <person name="Yalamanchili R.R."/>
            <person name="Lenoir G.M."/>
            <person name="Kieff E."/>
        </authorList>
    </citation>
    <scope>NUCLEOTIDE SEQUENCE [MRNA]</scope>
    <scope>TISSUE SPECIFICITY</scope>
    <scope>INDUCTION</scope>
</reference>
<reference key="2">
    <citation type="journal article" date="2004" name="Nat. Genet.">
        <title>Complete sequencing and characterization of 21,243 full-length human cDNAs.</title>
        <authorList>
            <person name="Ota T."/>
            <person name="Suzuki Y."/>
            <person name="Nishikawa T."/>
            <person name="Otsuki T."/>
            <person name="Sugiyama T."/>
            <person name="Irie R."/>
            <person name="Wakamatsu A."/>
            <person name="Hayashi K."/>
            <person name="Sato H."/>
            <person name="Nagai K."/>
            <person name="Kimura K."/>
            <person name="Makita H."/>
            <person name="Sekine M."/>
            <person name="Obayashi M."/>
            <person name="Nishi T."/>
            <person name="Shibahara T."/>
            <person name="Tanaka T."/>
            <person name="Ishii S."/>
            <person name="Yamamoto J."/>
            <person name="Saito K."/>
            <person name="Kawai Y."/>
            <person name="Isono Y."/>
            <person name="Nakamura Y."/>
            <person name="Nagahari K."/>
            <person name="Murakami K."/>
            <person name="Yasuda T."/>
            <person name="Iwayanagi T."/>
            <person name="Wagatsuma M."/>
            <person name="Shiratori A."/>
            <person name="Sudo H."/>
            <person name="Hosoiri T."/>
            <person name="Kaku Y."/>
            <person name="Kodaira H."/>
            <person name="Kondo H."/>
            <person name="Sugawara M."/>
            <person name="Takahashi M."/>
            <person name="Kanda K."/>
            <person name="Yokoi T."/>
            <person name="Furuya T."/>
            <person name="Kikkawa E."/>
            <person name="Omura Y."/>
            <person name="Abe K."/>
            <person name="Kamihara K."/>
            <person name="Katsuta N."/>
            <person name="Sato K."/>
            <person name="Tanikawa M."/>
            <person name="Yamazaki M."/>
            <person name="Ninomiya K."/>
            <person name="Ishibashi T."/>
            <person name="Yamashita H."/>
            <person name="Murakawa K."/>
            <person name="Fujimori K."/>
            <person name="Tanai H."/>
            <person name="Kimata M."/>
            <person name="Watanabe M."/>
            <person name="Hiraoka S."/>
            <person name="Chiba Y."/>
            <person name="Ishida S."/>
            <person name="Ono Y."/>
            <person name="Takiguchi S."/>
            <person name="Watanabe S."/>
            <person name="Yosida M."/>
            <person name="Hotuta T."/>
            <person name="Kusano J."/>
            <person name="Kanehori K."/>
            <person name="Takahashi-Fujii A."/>
            <person name="Hara H."/>
            <person name="Tanase T.-O."/>
            <person name="Nomura Y."/>
            <person name="Togiya S."/>
            <person name="Komai F."/>
            <person name="Hara R."/>
            <person name="Takeuchi K."/>
            <person name="Arita M."/>
            <person name="Imose N."/>
            <person name="Musashino K."/>
            <person name="Yuuki H."/>
            <person name="Oshima A."/>
            <person name="Sasaki N."/>
            <person name="Aotsuka S."/>
            <person name="Yoshikawa Y."/>
            <person name="Matsunawa H."/>
            <person name="Ichihara T."/>
            <person name="Shiohata N."/>
            <person name="Sano S."/>
            <person name="Moriya S."/>
            <person name="Momiyama H."/>
            <person name="Satoh N."/>
            <person name="Takami S."/>
            <person name="Terashima Y."/>
            <person name="Suzuki O."/>
            <person name="Nakagawa S."/>
            <person name="Senoh A."/>
            <person name="Mizoguchi H."/>
            <person name="Goto Y."/>
            <person name="Shimizu F."/>
            <person name="Wakebe H."/>
            <person name="Hishigaki H."/>
            <person name="Watanabe T."/>
            <person name="Sugiyama A."/>
            <person name="Takemoto M."/>
            <person name="Kawakami B."/>
            <person name="Yamazaki M."/>
            <person name="Watanabe K."/>
            <person name="Kumagai A."/>
            <person name="Itakura S."/>
            <person name="Fukuzumi Y."/>
            <person name="Fujimori Y."/>
            <person name="Komiyama M."/>
            <person name="Tashiro H."/>
            <person name="Tanigami A."/>
            <person name="Fujiwara T."/>
            <person name="Ono T."/>
            <person name="Yamada K."/>
            <person name="Fujii Y."/>
            <person name="Ozaki K."/>
            <person name="Hirao M."/>
            <person name="Ohmori Y."/>
            <person name="Kawabata A."/>
            <person name="Hikiji T."/>
            <person name="Kobatake N."/>
            <person name="Inagaki H."/>
            <person name="Ikema Y."/>
            <person name="Okamoto S."/>
            <person name="Okitani R."/>
            <person name="Kawakami T."/>
            <person name="Noguchi S."/>
            <person name="Itoh T."/>
            <person name="Shigeta K."/>
            <person name="Senba T."/>
            <person name="Matsumura K."/>
            <person name="Nakajima Y."/>
            <person name="Mizuno T."/>
            <person name="Morinaga M."/>
            <person name="Sasaki M."/>
            <person name="Togashi T."/>
            <person name="Oyama M."/>
            <person name="Hata H."/>
            <person name="Watanabe M."/>
            <person name="Komatsu T."/>
            <person name="Mizushima-Sugano J."/>
            <person name="Satoh T."/>
            <person name="Shirai Y."/>
            <person name="Takahashi Y."/>
            <person name="Nakagawa K."/>
            <person name="Okumura K."/>
            <person name="Nagase T."/>
            <person name="Nomura N."/>
            <person name="Kikuchi H."/>
            <person name="Masuho Y."/>
            <person name="Yamashita R."/>
            <person name="Nakai K."/>
            <person name="Yada T."/>
            <person name="Nakamura Y."/>
            <person name="Ohara O."/>
            <person name="Isogai T."/>
            <person name="Sugano S."/>
        </authorList>
    </citation>
    <scope>NUCLEOTIDE SEQUENCE [LARGE SCALE MRNA]</scope>
    <source>
        <tissue>Amygdala</tissue>
    </source>
</reference>
<reference key="3">
    <citation type="submission" date="2005-04" db="EMBL/GenBank/DDBJ databases">
        <authorList>
            <person name="Totoki Y."/>
            <person name="Toyoda A."/>
            <person name="Takeda T."/>
            <person name="Sakaki Y."/>
            <person name="Tanaka A."/>
            <person name="Yokoyama S."/>
        </authorList>
    </citation>
    <scope>NUCLEOTIDE SEQUENCE [LARGE SCALE MRNA]</scope>
    <source>
        <tissue>Thymus</tissue>
    </source>
</reference>
<reference key="4">
    <citation type="journal article" date="2004" name="Nature">
        <title>The DNA sequence and analysis of human chromosome 13.</title>
        <authorList>
            <person name="Dunham A."/>
            <person name="Matthews L.H."/>
            <person name="Burton J."/>
            <person name="Ashurst J.L."/>
            <person name="Howe K.L."/>
            <person name="Ashcroft K.J."/>
            <person name="Beare D.M."/>
            <person name="Burford D.C."/>
            <person name="Hunt S.E."/>
            <person name="Griffiths-Jones S."/>
            <person name="Jones M.C."/>
            <person name="Keenan S.J."/>
            <person name="Oliver K."/>
            <person name="Scott C.E."/>
            <person name="Ainscough R."/>
            <person name="Almeida J.P."/>
            <person name="Ambrose K.D."/>
            <person name="Andrews D.T."/>
            <person name="Ashwell R.I.S."/>
            <person name="Babbage A.K."/>
            <person name="Bagguley C.L."/>
            <person name="Bailey J."/>
            <person name="Bannerjee R."/>
            <person name="Barlow K.F."/>
            <person name="Bates K."/>
            <person name="Beasley H."/>
            <person name="Bird C.P."/>
            <person name="Bray-Allen S."/>
            <person name="Brown A.J."/>
            <person name="Brown J.Y."/>
            <person name="Burrill W."/>
            <person name="Carder C."/>
            <person name="Carter N.P."/>
            <person name="Chapman J.C."/>
            <person name="Clamp M.E."/>
            <person name="Clark S.Y."/>
            <person name="Clarke G."/>
            <person name="Clee C.M."/>
            <person name="Clegg S.C."/>
            <person name="Cobley V."/>
            <person name="Collins J.E."/>
            <person name="Corby N."/>
            <person name="Coville G.J."/>
            <person name="Deloukas P."/>
            <person name="Dhami P."/>
            <person name="Dunham I."/>
            <person name="Dunn M."/>
            <person name="Earthrowl M.E."/>
            <person name="Ellington A.G."/>
            <person name="Faulkner L."/>
            <person name="Frankish A.G."/>
            <person name="Frankland J."/>
            <person name="French L."/>
            <person name="Garner P."/>
            <person name="Garnett J."/>
            <person name="Gilbert J.G.R."/>
            <person name="Gilson C.J."/>
            <person name="Ghori J."/>
            <person name="Grafham D.V."/>
            <person name="Gribble S.M."/>
            <person name="Griffiths C."/>
            <person name="Hall R.E."/>
            <person name="Hammond S."/>
            <person name="Harley J.L."/>
            <person name="Hart E.A."/>
            <person name="Heath P.D."/>
            <person name="Howden P.J."/>
            <person name="Huckle E.J."/>
            <person name="Hunt P.J."/>
            <person name="Hunt A.R."/>
            <person name="Johnson C."/>
            <person name="Johnson D."/>
            <person name="Kay M."/>
            <person name="Kimberley A.M."/>
            <person name="King A."/>
            <person name="Laird G.K."/>
            <person name="Langford C.J."/>
            <person name="Lawlor S."/>
            <person name="Leongamornlert D.A."/>
            <person name="Lloyd D.M."/>
            <person name="Lloyd C."/>
            <person name="Loveland J.E."/>
            <person name="Lovell J."/>
            <person name="Martin S."/>
            <person name="Mashreghi-Mohammadi M."/>
            <person name="McLaren S.J."/>
            <person name="McMurray A."/>
            <person name="Milne S."/>
            <person name="Moore M.J.F."/>
            <person name="Nickerson T."/>
            <person name="Palmer S.A."/>
            <person name="Pearce A.V."/>
            <person name="Peck A.I."/>
            <person name="Pelan S."/>
            <person name="Phillimore B."/>
            <person name="Porter K.M."/>
            <person name="Rice C.M."/>
            <person name="Searle S."/>
            <person name="Sehra H.K."/>
            <person name="Shownkeen R."/>
            <person name="Skuce C.D."/>
            <person name="Smith M."/>
            <person name="Steward C.A."/>
            <person name="Sycamore N."/>
            <person name="Tester J."/>
            <person name="Thomas D.W."/>
            <person name="Tracey A."/>
            <person name="Tromans A."/>
            <person name="Tubby B."/>
            <person name="Wall M."/>
            <person name="Wallis J.M."/>
            <person name="West A.P."/>
            <person name="Whitehead S.L."/>
            <person name="Willey D.L."/>
            <person name="Wilming L."/>
            <person name="Wray P.W."/>
            <person name="Wright M.W."/>
            <person name="Young L."/>
            <person name="Coulson A."/>
            <person name="Durbin R.M."/>
            <person name="Hubbard T."/>
            <person name="Sulston J.E."/>
            <person name="Beck S."/>
            <person name="Bentley D.R."/>
            <person name="Rogers J."/>
            <person name="Ross M.T."/>
        </authorList>
    </citation>
    <scope>NUCLEOTIDE SEQUENCE [LARGE SCALE GENOMIC DNA]</scope>
</reference>
<reference key="5">
    <citation type="submission" date="2005-07" db="EMBL/GenBank/DDBJ databases">
        <authorList>
            <person name="Mural R.J."/>
            <person name="Istrail S."/>
            <person name="Sutton G.G."/>
            <person name="Florea L."/>
            <person name="Halpern A.L."/>
            <person name="Mobarry C.M."/>
            <person name="Lippert R."/>
            <person name="Walenz B."/>
            <person name="Shatkay H."/>
            <person name="Dew I."/>
            <person name="Miller J.R."/>
            <person name="Flanigan M.J."/>
            <person name="Edwards N.J."/>
            <person name="Bolanos R."/>
            <person name="Fasulo D."/>
            <person name="Halldorsson B.V."/>
            <person name="Hannenhalli S."/>
            <person name="Turner R."/>
            <person name="Yooseph S."/>
            <person name="Lu F."/>
            <person name="Nusskern D.R."/>
            <person name="Shue B.C."/>
            <person name="Zheng X.H."/>
            <person name="Zhong F."/>
            <person name="Delcher A.L."/>
            <person name="Huson D.H."/>
            <person name="Kravitz S.A."/>
            <person name="Mouchard L."/>
            <person name="Reinert K."/>
            <person name="Remington K.A."/>
            <person name="Clark A.G."/>
            <person name="Waterman M.S."/>
            <person name="Eichler E.E."/>
            <person name="Adams M.D."/>
            <person name="Hunkapiller M.W."/>
            <person name="Myers E.W."/>
            <person name="Venter J.C."/>
        </authorList>
    </citation>
    <scope>NUCLEOTIDE SEQUENCE [LARGE SCALE GENOMIC DNA]</scope>
</reference>
<reference key="6">
    <citation type="journal article" date="2004" name="Genome Res.">
        <title>The status, quality, and expansion of the NIH full-length cDNA project: the Mammalian Gene Collection (MGC).</title>
        <authorList>
            <consortium name="The MGC Project Team"/>
        </authorList>
    </citation>
    <scope>NUCLEOTIDE SEQUENCE [LARGE SCALE MRNA]</scope>
    <source>
        <tissue>Placenta</tissue>
    </source>
</reference>
<reference key="7">
    <citation type="journal article" date="2006" name="J. Biol. Chem.">
        <title>Molecular pharmacological phenotyping of EBI2. An orphan seven-transmembrane receptor with constitutive activity.</title>
        <authorList>
            <person name="Rosenkilde M.M."/>
            <person name="Benned-Jensen T."/>
            <person name="Andersen H."/>
            <person name="Holst P.J."/>
            <person name="Kledal T.N."/>
            <person name="Luttichau H.R."/>
            <person name="Larsen J.K."/>
            <person name="Christensen J.P."/>
            <person name="Schwartz T.W."/>
        </authorList>
    </citation>
    <scope>FUNCTION</scope>
    <scope>SUBCELLULAR LOCATION</scope>
    <scope>TISSUE SPECIFICITY</scope>
</reference>
<reference key="8">
    <citation type="journal article" date="2008" name="Mol. Pharmacol.">
        <title>Structural motifs of importance for the constitutive activity of the orphan 7TM receptor EBI2: analysis of receptor activation in the absence of an agonist.</title>
        <authorList>
            <person name="Benned-Jensen T."/>
            <person name="Rosenkilde M.M."/>
        </authorList>
    </citation>
    <scope>SUBCELLULAR LOCATION</scope>
    <scope>MUTAGENESIS OF ARG-87; CYS-256 AND PHE-257</scope>
</reference>
<reference key="9">
    <citation type="journal article" date="2011" name="J. Biol. Chem.">
        <title>Ligand modulation of the Epstein-Barr virus-induced seven-transmembrane receptor EBI2: identification of a potent and efficacious inverse agonist.</title>
        <authorList>
            <person name="Benned-Jensen T."/>
            <person name="Smethurst C."/>
            <person name="Holst P.J."/>
            <person name="Page K.R."/>
            <person name="Sauls H."/>
            <person name="Sivertsen B."/>
            <person name="Schwartz T.W."/>
            <person name="Blanchard A."/>
            <person name="Jepras R."/>
            <person name="Rosenkilde M.M."/>
        </authorList>
    </citation>
    <scope>IDENTIFICATION OF GSK682753A AS AN INVERSE AGONIST</scope>
    <scope>SUBCELLULAR LOCATION</scope>
    <scope>FUNCTION</scope>
    <scope>MUTAGENESIS OF PHE-111</scope>
</reference>
<reference key="10">
    <citation type="journal article" date="2011" name="Nature">
        <title>Oxysterols direct immune cell migration via EBI2.</title>
        <authorList>
            <person name="Hannedouche S."/>
            <person name="Zhang J."/>
            <person name="Yi T."/>
            <person name="Shen W."/>
            <person name="Nguyen D."/>
            <person name="Pereira J.P."/>
            <person name="Guerini D."/>
            <person name="Baumgarten B.U."/>
            <person name="Roggo S."/>
            <person name="Wen B."/>
            <person name="Knochenmuss R."/>
            <person name="Noel S."/>
            <person name="Gessier F."/>
            <person name="Kelly L.M."/>
            <person name="Vanek M."/>
            <person name="Laurent S."/>
            <person name="Preuss I."/>
            <person name="Miault C."/>
            <person name="Christen I."/>
            <person name="Karuna R."/>
            <person name="Li W."/>
            <person name="Koo D.I."/>
            <person name="Suply T."/>
            <person name="Schmedt C."/>
            <person name="Peters E.C."/>
            <person name="Falchetto R."/>
            <person name="Katopodis A."/>
            <person name="Spanka C."/>
            <person name="Roy M.O."/>
            <person name="Detheux M."/>
            <person name="Chen Y.A."/>
            <person name="Schultz P.G."/>
            <person name="Cho C.Y."/>
            <person name="Seuwen K."/>
            <person name="Cyster J.G."/>
            <person name="Sailer A.W."/>
        </authorList>
    </citation>
    <scope>FUNCTION</scope>
</reference>
<reference key="11">
    <citation type="journal article" date="2012" name="FASEB J.">
        <title>EBI2 regulates CXCL13-mediated responses by heterodimerization with CXCR5.</title>
        <authorList>
            <person name="Barroso R."/>
            <person name="Martinez Munoz L."/>
            <person name="Barrondo S."/>
            <person name="Vega B."/>
            <person name="Holgado B.L."/>
            <person name="Lucas P."/>
            <person name="Baillo A."/>
            <person name="Salles J."/>
            <person name="Rodriguez-Frade J.M."/>
            <person name="Mellado M."/>
        </authorList>
    </citation>
    <scope>FUNCTION</scope>
    <scope>SUBUNIT</scope>
    <scope>INTERACTION WITH CXCR5</scope>
</reference>
<reference key="12">
    <citation type="journal article" date="2012" name="J. Biol. Chem.">
        <title>Molecular characterization of oxysterol binding to the Epstein-Barr virus-induced gene 2 (GPR183).</title>
        <authorList>
            <person name="Benned-Jensen T."/>
            <person name="Norn C."/>
            <person name="Laurent S."/>
            <person name="Madsen C.M."/>
            <person name="Larsen H.M."/>
            <person name="Arfelt K.N."/>
            <person name="Wolf R.M."/>
            <person name="Frimurer T."/>
            <person name="Sailer A.W."/>
            <person name="Rosenkilde M.M."/>
        </authorList>
    </citation>
    <scope>FUNCTION</scope>
    <scope>AGONIST-BINDING</scope>
    <scope>MUTAGENESIS OF ASP-77; ARG-87; TYR-90; PHE-111; TYR-112; THR-115; TYR-116; TYR-205 AND TYR-260</scope>
</reference>
<reference key="13">
    <citation type="journal article" date="2012" name="Mol. Pharmacol.">
        <title>Identification of structural motifs critical for epstein-barr virus-induced molecule 2 function and homology modeling of the ligand docking site.</title>
        <authorList>
            <person name="Zhang L."/>
            <person name="Shih A.Y."/>
            <person name="Yang X.V."/>
            <person name="Kuei C."/>
            <person name="Wu J."/>
            <person name="Deng X."/>
            <person name="Mani N.S."/>
            <person name="Mirzadegan T."/>
            <person name="Sun S."/>
            <person name="Lovenberg T.W."/>
            <person name="Liu C."/>
        </authorList>
    </citation>
    <scope>FUNCTION</scope>
    <scope>AGONIST-BINDING</scope>
    <scope>SUBCELLULAR LOCATION</scope>
    <scope>MUTAGENESIS OF CYS-21; ASP-77; PRO-85; ARG-87; TYR-90; CYS-104; TYR-112; ASN-114; TYR-116; CYS-181; GLU-183; LEU-197; PHE-257; TYR-260; HIS-261; ILE-264; CYS-280; HIS-291; VAL-294 AND MET-297</scope>
</reference>
<reference key="14">
    <citation type="journal article" date="2013" name="FEBS Open Bio">
        <title>Small molecule antagonism of oxysterol-induced Epstein-Barr virus induced gene 2 (EBI2) activation.</title>
        <authorList>
            <person name="Benned-Jensen T."/>
            <person name="Madsen C.M."/>
            <person name="Arfelt K.N."/>
            <person name="Smethurts C."/>
            <person name="Blanchard A."/>
            <person name="Jepras R."/>
            <person name="Rosenkilde M.M."/>
        </authorList>
    </citation>
    <scope>IDENTIFICATION OF GSK682753A AS AN INVERSE AGONIST</scope>
</reference>
<reference key="15">
    <citation type="journal article" date="2014" name="J. Med. Chem.">
        <title>Identification and characterization of small molecule modulators of the Epstein-Barr virus-induced gene 2 (EBI2) receptor.</title>
        <authorList>
            <person name="Gessier F."/>
            <person name="Preuss I."/>
            <person name="Yin H."/>
            <person name="Rosenkilde M.M."/>
            <person name="Laurent S."/>
            <person name="Endres R."/>
            <person name="Chen Y.A."/>
            <person name="Marsilje T.H."/>
            <person name="Seuwen K."/>
            <person name="Nguyen D.G."/>
            <person name="Sailer A.W."/>
        </authorList>
    </citation>
    <scope>IDENTIFICATION OF NIBR189 AS AN AGONIST</scope>
</reference>
<reference key="16">
    <citation type="journal article" date="2015" name="Glia">
        <title>EBI2 regulates intracellular signaling and migration in human astrocyte.</title>
        <authorList>
            <person name="Rutkowska A."/>
            <person name="Preuss I."/>
            <person name="Gessier F."/>
            <person name="Sailer A.W."/>
            <person name="Dev K.K."/>
        </authorList>
    </citation>
    <scope>FUNCTION</scope>
    <scope>TISSUE SPECIFICITY</scope>
</reference>
<reference key="17">
    <citation type="journal article" date="2008" name="Nature">
        <title>DNA sequencing of a cytogenetically normal acute myeloid leukaemia genome.</title>
        <authorList>
            <person name="Ley T.J."/>
            <person name="Mardis E.R."/>
            <person name="Ding L."/>
            <person name="Fulton B."/>
            <person name="McLellan M.D."/>
            <person name="Chen K."/>
            <person name="Dooling D."/>
            <person name="Dunford-Shore B.H."/>
            <person name="McGrath S."/>
            <person name="Hickenbotham M."/>
            <person name="Cook L."/>
            <person name="Abbott R."/>
            <person name="Larson D.E."/>
            <person name="Koboldt D.C."/>
            <person name="Pohl C."/>
            <person name="Smith S."/>
            <person name="Hawkins A."/>
            <person name="Abbott S."/>
            <person name="Locke D."/>
            <person name="Hillier L.W."/>
            <person name="Miner T."/>
            <person name="Fulton L."/>
            <person name="Magrini V."/>
            <person name="Wylie T."/>
            <person name="Glasscock J."/>
            <person name="Conyers J."/>
            <person name="Sander N."/>
            <person name="Shi X."/>
            <person name="Osborne J.R."/>
            <person name="Minx P."/>
            <person name="Gordon D."/>
            <person name="Chinwalla A."/>
            <person name="Zhao Y."/>
            <person name="Ries R.E."/>
            <person name="Payton J.E."/>
            <person name="Westervelt P."/>
            <person name="Tomasson M.H."/>
            <person name="Watson M."/>
            <person name="Baty J."/>
            <person name="Ivanovich J."/>
            <person name="Heath S."/>
            <person name="Shannon W.D."/>
            <person name="Nagarajan R."/>
            <person name="Walter M.J."/>
            <person name="Link D.C."/>
            <person name="Graubert T.A."/>
            <person name="DiPersio J.F."/>
            <person name="Wilson R.K."/>
        </authorList>
    </citation>
    <scope>VARIANT [LARGE SCALE ANALYSIS] VAL-338</scope>
</reference>
<gene>
    <name evidence="20" type="primary">GPR183</name>
    <name evidence="17" type="synonym">EBI2</name>
</gene>
<name>GP183_HUMAN</name>
<sequence length="361" mass="41224">MDIQMANNFTPPSATPQGNDCDLYAHHSTARIVMPLHYSLVFIIGLVGNLLALVVIVQNRKKINSTTLYSTNLVISDILFTTALPTRIAYYAMGFDWRIGDALCRITALVFYINTYAGVNFMTCLSIDRFIAVVHPLRYNKIKRIEHAKGVCIFVWILVFAQTLPLLINPMSKQEAERITCMEYPNFEETKSLPWILLGACFIGYVLPLIIILICYSQICCKLFRTAKQNPLTEKSGVNKKALNTIILIIVVFVLCFTPYHVAIIQHMIKKLRFSNFLECSQRHSFQISLHFTVCLMNFNCCMDPFIYFFACKGYKRKVMRMLKRQVSVSISSAVKSAPEENSREMTETQMMIHSKSSNGK</sequence>
<dbReference type="EMBL" id="L08177">
    <property type="protein sequence ID" value="AAA35924.1"/>
    <property type="molecule type" value="mRNA"/>
</dbReference>
<dbReference type="EMBL" id="AK292091">
    <property type="protein sequence ID" value="BAF84780.1"/>
    <property type="molecule type" value="mRNA"/>
</dbReference>
<dbReference type="EMBL" id="AK313443">
    <property type="protein sequence ID" value="BAG36232.1"/>
    <property type="molecule type" value="mRNA"/>
</dbReference>
<dbReference type="EMBL" id="AK223390">
    <property type="protein sequence ID" value="BAD97110.1"/>
    <property type="molecule type" value="mRNA"/>
</dbReference>
<dbReference type="EMBL" id="AL160155">
    <property type="status" value="NOT_ANNOTATED_CDS"/>
    <property type="molecule type" value="Genomic_DNA"/>
</dbReference>
<dbReference type="EMBL" id="CH471085">
    <property type="protein sequence ID" value="EAX09018.1"/>
    <property type="molecule type" value="Genomic_DNA"/>
</dbReference>
<dbReference type="EMBL" id="BC020752">
    <property type="protein sequence ID" value="AAH20752.1"/>
    <property type="molecule type" value="mRNA"/>
</dbReference>
<dbReference type="CCDS" id="CCDS9492.1"/>
<dbReference type="PIR" id="B45680">
    <property type="entry name" value="B45680"/>
</dbReference>
<dbReference type="RefSeq" id="NP_004942.1">
    <property type="nucleotide sequence ID" value="NM_004951.5"/>
</dbReference>
<dbReference type="RefSeq" id="XP_016875894.1">
    <property type="nucleotide sequence ID" value="XM_017020405.1"/>
</dbReference>
<dbReference type="PDB" id="7TUY">
    <property type="method" value="EM"/>
    <property type="resolution" value="2.98 A"/>
    <property type="chains" value="R=1-361"/>
</dbReference>
<dbReference type="PDB" id="7TUZ">
    <property type="method" value="EM"/>
    <property type="resolution" value="3.12 A"/>
    <property type="chains" value="R=2-361"/>
</dbReference>
<dbReference type="PDBsum" id="7TUY"/>
<dbReference type="PDBsum" id="7TUZ"/>
<dbReference type="EMDB" id="EMD-26135"/>
<dbReference type="EMDB" id="EMD-26136"/>
<dbReference type="SMR" id="P32249"/>
<dbReference type="BioGRID" id="108212">
    <property type="interactions" value="37"/>
</dbReference>
<dbReference type="CORUM" id="P32249"/>
<dbReference type="FunCoup" id="P32249">
    <property type="interactions" value="835"/>
</dbReference>
<dbReference type="IntAct" id="P32249">
    <property type="interactions" value="34"/>
</dbReference>
<dbReference type="STRING" id="9606.ENSP00000365596"/>
<dbReference type="BindingDB" id="P32249"/>
<dbReference type="ChEMBL" id="CHEMBL3259470"/>
<dbReference type="GuidetoPHARMACOLOGY" id="81"/>
<dbReference type="TCDB" id="9.A.14.13.40">
    <property type="family name" value="the g-protein-coupled receptor (gpcr) family"/>
</dbReference>
<dbReference type="CarbonylDB" id="P32249"/>
<dbReference type="iPTMnet" id="P32249"/>
<dbReference type="PhosphoSitePlus" id="P32249"/>
<dbReference type="SwissPalm" id="P32249"/>
<dbReference type="BioMuta" id="GPR183"/>
<dbReference type="DMDM" id="205371788"/>
<dbReference type="MassIVE" id="P32249"/>
<dbReference type="PaxDb" id="9606-ENSP00000365596"/>
<dbReference type="PeptideAtlas" id="P32249"/>
<dbReference type="ProteomicsDB" id="54857"/>
<dbReference type="Antibodypedia" id="10905">
    <property type="antibodies" value="230 antibodies from 33 providers"/>
</dbReference>
<dbReference type="DNASU" id="1880"/>
<dbReference type="Ensembl" id="ENST00000376414.5">
    <property type="protein sequence ID" value="ENSP00000365596.4"/>
    <property type="gene ID" value="ENSG00000169508.7"/>
</dbReference>
<dbReference type="GeneID" id="1880"/>
<dbReference type="KEGG" id="hsa:1880"/>
<dbReference type="MANE-Select" id="ENST00000376414.5">
    <property type="protein sequence ID" value="ENSP00000365596.4"/>
    <property type="RefSeq nucleotide sequence ID" value="NM_004951.5"/>
    <property type="RefSeq protein sequence ID" value="NP_004942.1"/>
</dbReference>
<dbReference type="UCSC" id="uc001vog.4">
    <property type="organism name" value="human"/>
</dbReference>
<dbReference type="AGR" id="HGNC:3128"/>
<dbReference type="CTD" id="1880"/>
<dbReference type="DisGeNET" id="1880"/>
<dbReference type="GeneCards" id="GPR183"/>
<dbReference type="HGNC" id="HGNC:3128">
    <property type="gene designation" value="GPR183"/>
</dbReference>
<dbReference type="HPA" id="ENSG00000169508">
    <property type="expression patterns" value="Tissue enhanced (bone marrow, lymphoid tissue)"/>
</dbReference>
<dbReference type="MIM" id="605741">
    <property type="type" value="gene"/>
</dbReference>
<dbReference type="neXtProt" id="NX_P32249"/>
<dbReference type="OpenTargets" id="ENSG00000169508"/>
<dbReference type="PharmGKB" id="PA162390174"/>
<dbReference type="VEuPathDB" id="HostDB:ENSG00000169508"/>
<dbReference type="eggNOG" id="ENOG502QWD9">
    <property type="taxonomic scope" value="Eukaryota"/>
</dbReference>
<dbReference type="GeneTree" id="ENSGT01030000234518"/>
<dbReference type="HOGENOM" id="CLU_009579_8_2_1"/>
<dbReference type="InParanoid" id="P32249"/>
<dbReference type="OMA" id="NERTTCM"/>
<dbReference type="OrthoDB" id="10021141at2759"/>
<dbReference type="PAN-GO" id="P32249">
    <property type="GO annotations" value="2 GO annotations based on evolutionary models"/>
</dbReference>
<dbReference type="PhylomeDB" id="P32249"/>
<dbReference type="TreeFam" id="TF350009"/>
<dbReference type="PathwayCommons" id="P32249"/>
<dbReference type="Reactome" id="R-HSA-373076">
    <property type="pathway name" value="Class A/1 (Rhodopsin-like receptors)"/>
</dbReference>
<dbReference type="Reactome" id="R-HSA-418594">
    <property type="pathway name" value="G alpha (i) signalling events"/>
</dbReference>
<dbReference type="SignaLink" id="P32249"/>
<dbReference type="SIGNOR" id="P32249"/>
<dbReference type="BioGRID-ORCS" id="1880">
    <property type="hits" value="11 hits in 1131 CRISPR screens"/>
</dbReference>
<dbReference type="GeneWiki" id="GPR183"/>
<dbReference type="GenomeRNAi" id="1880"/>
<dbReference type="Pharos" id="P32249">
    <property type="development level" value="Tchem"/>
</dbReference>
<dbReference type="PRO" id="PR:P32249"/>
<dbReference type="Proteomes" id="UP000005640">
    <property type="component" value="Chromosome 13"/>
</dbReference>
<dbReference type="RNAct" id="P32249">
    <property type="molecule type" value="protein"/>
</dbReference>
<dbReference type="Bgee" id="ENSG00000169508">
    <property type="expression patterns" value="Expressed in vermiform appendix and 169 other cell types or tissues"/>
</dbReference>
<dbReference type="ExpressionAtlas" id="P32249">
    <property type="expression patterns" value="baseline and differential"/>
</dbReference>
<dbReference type="GO" id="GO:0005654">
    <property type="term" value="C:nucleoplasm"/>
    <property type="evidence" value="ECO:0000314"/>
    <property type="project" value="HPA"/>
</dbReference>
<dbReference type="GO" id="GO:0005886">
    <property type="term" value="C:plasma membrane"/>
    <property type="evidence" value="ECO:0000314"/>
    <property type="project" value="UniProtKB"/>
</dbReference>
<dbReference type="GO" id="GO:0004930">
    <property type="term" value="F:G protein-coupled receptor activity"/>
    <property type="evidence" value="ECO:0000314"/>
    <property type="project" value="UniProtKB"/>
</dbReference>
<dbReference type="GO" id="GO:0008142">
    <property type="term" value="F:oxysterol binding"/>
    <property type="evidence" value="ECO:0000314"/>
    <property type="project" value="UniProtKB"/>
</dbReference>
<dbReference type="GO" id="GO:0002250">
    <property type="term" value="P:adaptive immune response"/>
    <property type="evidence" value="ECO:0000250"/>
    <property type="project" value="UniProtKB"/>
</dbReference>
<dbReference type="GO" id="GO:0002312">
    <property type="term" value="P:B cell activation involved in immune response"/>
    <property type="evidence" value="ECO:0000318"/>
    <property type="project" value="GO_Central"/>
</dbReference>
<dbReference type="GO" id="GO:0002407">
    <property type="term" value="P:dendritic cell chemotaxis"/>
    <property type="evidence" value="ECO:0000250"/>
    <property type="project" value="UniProtKB"/>
</dbReference>
<dbReference type="GO" id="GO:0036145">
    <property type="term" value="P:dendritic cell homeostasis"/>
    <property type="evidence" value="ECO:0000250"/>
    <property type="project" value="UniProtKB"/>
</dbReference>
<dbReference type="GO" id="GO:0007186">
    <property type="term" value="P:G protein-coupled receptor signaling pathway"/>
    <property type="evidence" value="ECO:0000314"/>
    <property type="project" value="UniProtKB"/>
</dbReference>
<dbReference type="GO" id="GO:0006959">
    <property type="term" value="P:humoral immune response"/>
    <property type="evidence" value="ECO:0000250"/>
    <property type="project" value="UniProtKB"/>
</dbReference>
<dbReference type="GO" id="GO:0006955">
    <property type="term" value="P:immune response"/>
    <property type="evidence" value="ECO:0000304"/>
    <property type="project" value="ProtInc"/>
</dbReference>
<dbReference type="GO" id="GO:0030595">
    <property type="term" value="P:leukocyte chemotaxis"/>
    <property type="evidence" value="ECO:0000315"/>
    <property type="project" value="UniProtKB"/>
</dbReference>
<dbReference type="GO" id="GO:0002313">
    <property type="term" value="P:mature B cell differentiation involved in immune response"/>
    <property type="evidence" value="ECO:0000250"/>
    <property type="project" value="UniProtKB"/>
</dbReference>
<dbReference type="GO" id="GO:0030316">
    <property type="term" value="P:osteoclast differentiation"/>
    <property type="evidence" value="ECO:0000250"/>
    <property type="project" value="UniProtKB"/>
</dbReference>
<dbReference type="GO" id="GO:0030890">
    <property type="term" value="P:positive regulation of B cell proliferation"/>
    <property type="evidence" value="ECO:0000314"/>
    <property type="project" value="UniProtKB"/>
</dbReference>
<dbReference type="GO" id="GO:0070374">
    <property type="term" value="P:positive regulation of ERK1 and ERK2 cascade"/>
    <property type="evidence" value="ECO:0000314"/>
    <property type="project" value="UniProtKB"/>
</dbReference>
<dbReference type="GO" id="GO:2000458">
    <property type="term" value="P:regulation of astrocyte chemotaxis"/>
    <property type="evidence" value="ECO:0000314"/>
    <property type="project" value="UniProtKB"/>
</dbReference>
<dbReference type="GO" id="GO:0010818">
    <property type="term" value="P:T cell chemotaxis"/>
    <property type="evidence" value="ECO:0000250"/>
    <property type="project" value="UniProtKB"/>
</dbReference>
<dbReference type="GO" id="GO:0061470">
    <property type="term" value="P:T follicular helper cell differentiation"/>
    <property type="evidence" value="ECO:0000250"/>
    <property type="project" value="UniProtKB"/>
</dbReference>
<dbReference type="CDD" id="cd15159">
    <property type="entry name" value="7tmA_EBI2"/>
    <property type="match status" value="1"/>
</dbReference>
<dbReference type="FunFam" id="1.20.1070.10:FF:000017">
    <property type="entry name" value="lysophosphatidic acid receptor 4"/>
    <property type="match status" value="1"/>
</dbReference>
<dbReference type="Gene3D" id="1.20.1070.10">
    <property type="entry name" value="Rhodopsin 7-helix transmembrane proteins"/>
    <property type="match status" value="1"/>
</dbReference>
<dbReference type="InterPro" id="IPR047160">
    <property type="entry name" value="GP183-like"/>
</dbReference>
<dbReference type="InterPro" id="IPR000276">
    <property type="entry name" value="GPCR_Rhodpsn"/>
</dbReference>
<dbReference type="InterPro" id="IPR017452">
    <property type="entry name" value="GPCR_Rhodpsn_7TM"/>
</dbReference>
<dbReference type="PANTHER" id="PTHR24237">
    <property type="entry name" value="G-PROTEIN COUPLED RECEPTOR"/>
    <property type="match status" value="1"/>
</dbReference>
<dbReference type="PANTHER" id="PTHR24237:SF7">
    <property type="entry name" value="G-PROTEIN COUPLED RECEPTOR 183"/>
    <property type="match status" value="1"/>
</dbReference>
<dbReference type="Pfam" id="PF00001">
    <property type="entry name" value="7tm_1"/>
    <property type="match status" value="1"/>
</dbReference>
<dbReference type="PRINTS" id="PR00237">
    <property type="entry name" value="GPCRRHODOPSN"/>
</dbReference>
<dbReference type="PRINTS" id="PR01157">
    <property type="entry name" value="P2YPURNOCPTR"/>
</dbReference>
<dbReference type="SMART" id="SM01381">
    <property type="entry name" value="7TM_GPCR_Srsx"/>
    <property type="match status" value="1"/>
</dbReference>
<dbReference type="SUPFAM" id="SSF81321">
    <property type="entry name" value="Family A G protein-coupled receptor-like"/>
    <property type="match status" value="1"/>
</dbReference>
<dbReference type="PROSITE" id="PS00237">
    <property type="entry name" value="G_PROTEIN_RECEP_F1_1"/>
    <property type="match status" value="1"/>
</dbReference>
<dbReference type="PROSITE" id="PS50262">
    <property type="entry name" value="G_PROTEIN_RECEP_F1_2"/>
    <property type="match status" value="1"/>
</dbReference>
<proteinExistence type="evidence at protein level"/>
<protein>
    <recommendedName>
        <fullName evidence="18">G-protein coupled receptor 183</fullName>
    </recommendedName>
    <alternativeName>
        <fullName evidence="17">Epstein-Barr virus-induced G-protein coupled receptor 2</fullName>
        <shortName evidence="17">EBI2</shortName>
        <shortName evidence="17">EBV-induced G-protein coupled receptor 2</shortName>
        <shortName evidence="16">hEBI2</shortName>
    </alternativeName>
</protein>